<proteinExistence type="evidence at transcript level"/>
<organism>
    <name type="scientific">Cryptococcus neoformans var. grubii serotype A (strain H99 / ATCC 208821 / CBS 10515 / FGSC 9487)</name>
    <name type="common">Filobasidiella neoformans var. grubii</name>
    <dbReference type="NCBI Taxonomy" id="235443"/>
    <lineage>
        <taxon>Eukaryota</taxon>
        <taxon>Fungi</taxon>
        <taxon>Dikarya</taxon>
        <taxon>Basidiomycota</taxon>
        <taxon>Agaricomycotina</taxon>
        <taxon>Tremellomycetes</taxon>
        <taxon>Tremellales</taxon>
        <taxon>Cryptococcaceae</taxon>
        <taxon>Cryptococcus</taxon>
        <taxon>Cryptococcus neoformans species complex</taxon>
    </lineage>
</organism>
<gene>
    <name evidence="11" type="primary">ATM1</name>
    <name type="ORF">CNAG_04358</name>
</gene>
<sequence length="732" mass="80771">MGFGSCSRHALFTPAAFSGSFTTMTTSCFKRVYTAQIHGGDALGKRLPSVSSFSGQLPRHGLHRQSLAFFSTSHRRQTSPPPSPRTTSQSPTVPSKASTTPPTSLNTSKPIATESQDKTDWSIIVKLAGNIWPKNNPNVKFRVIGALTLLVAGKVLNVQVPFFFKTIVDSLNVPITESTTVWVLAGASIAGYGAARILTTLFGELRNAVFASVAQNAIRKVARETFEHLLNMDMKFHLERQTGGLTRAIDRGTKGISFILSSIVFHVIPTALEISMVCGILSWKFGWDFAAVTAITMLLYTWFTIKTTAWRTTFRKQANAADNKGATVAVDSLINYEAVKSFNNEKYEVAQYDTTLKAYEKASVKIATSLAALNSGQNFIFSSALTMMMLLGAQGIVKGTMTVGDLVLVNQLVFQLSLPLNFLGTVYRELRQSLIDMDVMFNLQSLNSAIKDTPTAKPLHLKGGEIEFRNVAFAYHPERPIFRDLSFKIPAGQKVAIVGPSGCGKSTVFRLLFRFYDSNSGQILIDGQDIKTVTLDSLRRSIGVVPQDTPLFHADILHNIRYGNLEATDEQVYEAARKAHVEGTIQRLPEKYATKVGERGLMISGGEKQRLAVARVLLKDPPVLFFDEATSALDVYTETELMRNINSILTGQGKTSVFIAHRLRTISDADLIIVLQDGYVAEQGTHEQLLAMPGGVYHRLWQAQLTESTQPTDEEIERQREELEVVDEKKKQ</sequence>
<keyword id="KW-0067">ATP-binding</keyword>
<keyword id="KW-0472">Membrane</keyword>
<keyword id="KW-0496">Mitochondrion</keyword>
<keyword id="KW-0999">Mitochondrion inner membrane</keyword>
<keyword id="KW-0547">Nucleotide-binding</keyword>
<keyword id="KW-0809">Transit peptide</keyword>
<keyword id="KW-1278">Translocase</keyword>
<keyword id="KW-0812">Transmembrane</keyword>
<keyword id="KW-1133">Transmembrane helix</keyword>
<keyword id="KW-0813">Transport</keyword>
<protein>
    <recommendedName>
        <fullName evidence="11">Iron-sulfur clusters transporter ATM1, mitochondrial</fullName>
        <ecNumber evidence="1">7.-.-.-</ecNumber>
    </recommendedName>
</protein>
<dbReference type="EC" id="7.-.-.-" evidence="1"/>
<dbReference type="EMBL" id="CP003828">
    <property type="protein sequence ID" value="AFR97089.1"/>
    <property type="molecule type" value="Genomic_DNA"/>
</dbReference>
<dbReference type="EMBL" id="CP003828">
    <property type="protein sequence ID" value="AGV14605.1"/>
    <property type="molecule type" value="Genomic_DNA"/>
</dbReference>
<dbReference type="RefSeq" id="XP_012051758.1">
    <property type="nucleotide sequence ID" value="XM_012196368.1"/>
</dbReference>
<dbReference type="RefSeq" id="XP_012051759.1">
    <property type="nucleotide sequence ID" value="XM_012196369.1"/>
</dbReference>
<dbReference type="SMR" id="J9VWU3"/>
<dbReference type="GeneID" id="23887793"/>
<dbReference type="KEGG" id="cng:CNAG_04358"/>
<dbReference type="VEuPathDB" id="FungiDB:CNAG_04358"/>
<dbReference type="HOGENOM" id="CLU_000604_84_1_1"/>
<dbReference type="OrthoDB" id="5027at5206"/>
<dbReference type="Proteomes" id="UP000010091">
    <property type="component" value="Chromosome 9"/>
</dbReference>
<dbReference type="GO" id="GO:0005743">
    <property type="term" value="C:mitochondrial inner membrane"/>
    <property type="evidence" value="ECO:0007669"/>
    <property type="project" value="UniProtKB-SubCell"/>
</dbReference>
<dbReference type="GO" id="GO:0031966">
    <property type="term" value="C:mitochondrial membrane"/>
    <property type="evidence" value="ECO:0000314"/>
    <property type="project" value="UniProtKB"/>
</dbReference>
<dbReference type="GO" id="GO:0140359">
    <property type="term" value="F:ABC-type transporter activity"/>
    <property type="evidence" value="ECO:0007669"/>
    <property type="project" value="InterPro"/>
</dbReference>
<dbReference type="GO" id="GO:0005524">
    <property type="term" value="F:ATP binding"/>
    <property type="evidence" value="ECO:0007669"/>
    <property type="project" value="UniProtKB-KW"/>
</dbReference>
<dbReference type="GO" id="GO:0016887">
    <property type="term" value="F:ATP hydrolysis activity"/>
    <property type="evidence" value="ECO:0007669"/>
    <property type="project" value="InterPro"/>
</dbReference>
<dbReference type="GO" id="GO:0006879">
    <property type="term" value="P:intracellular iron ion homeostasis"/>
    <property type="evidence" value="ECO:0007669"/>
    <property type="project" value="TreeGrafter"/>
</dbReference>
<dbReference type="GO" id="GO:0016226">
    <property type="term" value="P:iron-sulfur cluster assembly"/>
    <property type="evidence" value="ECO:0000315"/>
    <property type="project" value="UniProtKB"/>
</dbReference>
<dbReference type="GO" id="GO:0140466">
    <property type="term" value="P:iron-sulfur cluster export from the mitochondrion"/>
    <property type="evidence" value="ECO:0000315"/>
    <property type="project" value="UniProtKB"/>
</dbReference>
<dbReference type="CDD" id="cd18582">
    <property type="entry name" value="ABC_6TM_ATM1_ABCB7"/>
    <property type="match status" value="1"/>
</dbReference>
<dbReference type="CDD" id="cd03253">
    <property type="entry name" value="ABCC_ATM1_transporter"/>
    <property type="match status" value="1"/>
</dbReference>
<dbReference type="FunFam" id="1.20.1560.10:FF:000004">
    <property type="entry name" value="ATP-binding cassette sub-family B member 7"/>
    <property type="match status" value="1"/>
</dbReference>
<dbReference type="FunFam" id="3.40.50.300:FF:000186">
    <property type="entry name" value="ATP-binding cassette sub-family B member 7, mitochondrial"/>
    <property type="match status" value="1"/>
</dbReference>
<dbReference type="Gene3D" id="1.20.1560.10">
    <property type="entry name" value="ABC transporter type 1, transmembrane domain"/>
    <property type="match status" value="1"/>
</dbReference>
<dbReference type="Gene3D" id="3.40.50.300">
    <property type="entry name" value="P-loop containing nucleotide triphosphate hydrolases"/>
    <property type="match status" value="1"/>
</dbReference>
<dbReference type="InterPro" id="IPR003593">
    <property type="entry name" value="AAA+_ATPase"/>
</dbReference>
<dbReference type="InterPro" id="IPR011527">
    <property type="entry name" value="ABC1_TM_dom"/>
</dbReference>
<dbReference type="InterPro" id="IPR036640">
    <property type="entry name" value="ABC1_TM_sf"/>
</dbReference>
<dbReference type="InterPro" id="IPR003439">
    <property type="entry name" value="ABC_transporter-like_ATP-bd"/>
</dbReference>
<dbReference type="InterPro" id="IPR017871">
    <property type="entry name" value="ABC_transporter-like_CS"/>
</dbReference>
<dbReference type="InterPro" id="IPR027417">
    <property type="entry name" value="P-loop_NTPase"/>
</dbReference>
<dbReference type="InterPro" id="IPR039421">
    <property type="entry name" value="Type_1_exporter"/>
</dbReference>
<dbReference type="PANTHER" id="PTHR24221">
    <property type="entry name" value="ATP-BINDING CASSETTE SUB-FAMILY B"/>
    <property type="match status" value="1"/>
</dbReference>
<dbReference type="PANTHER" id="PTHR24221:SF402">
    <property type="entry name" value="IRON-SULFUR CLUSTERS TRANSPORTER ABCB7, MITOCHONDRIAL"/>
    <property type="match status" value="1"/>
</dbReference>
<dbReference type="Pfam" id="PF00664">
    <property type="entry name" value="ABC_membrane"/>
    <property type="match status" value="1"/>
</dbReference>
<dbReference type="Pfam" id="PF00005">
    <property type="entry name" value="ABC_tran"/>
    <property type="match status" value="1"/>
</dbReference>
<dbReference type="SMART" id="SM00382">
    <property type="entry name" value="AAA"/>
    <property type="match status" value="1"/>
</dbReference>
<dbReference type="SUPFAM" id="SSF90123">
    <property type="entry name" value="ABC transporter transmembrane region"/>
    <property type="match status" value="1"/>
</dbReference>
<dbReference type="SUPFAM" id="SSF52540">
    <property type="entry name" value="P-loop containing nucleoside triphosphate hydrolases"/>
    <property type="match status" value="1"/>
</dbReference>
<dbReference type="PROSITE" id="PS50929">
    <property type="entry name" value="ABC_TM1F"/>
    <property type="match status" value="1"/>
</dbReference>
<dbReference type="PROSITE" id="PS00211">
    <property type="entry name" value="ABC_TRANSPORTER_1"/>
    <property type="match status" value="1"/>
</dbReference>
<dbReference type="PROSITE" id="PS50893">
    <property type="entry name" value="ABC_TRANSPORTER_2"/>
    <property type="match status" value="1"/>
</dbReference>
<reference key="1">
    <citation type="journal article" date="2014" name="PLoS Genet.">
        <title>Analysis of the genome and transcriptome of Cryptococcus neoformans var. grubii reveals complex RNA expression and microevolution leading to virulence attenuation.</title>
        <authorList>
            <person name="Janbon G."/>
            <person name="Ormerod K.L."/>
            <person name="Paulet D."/>
            <person name="Byrnes E.J. III"/>
            <person name="Yadav V."/>
            <person name="Chatterjee G."/>
            <person name="Mullapudi N."/>
            <person name="Hon C.-C."/>
            <person name="Billmyre R.B."/>
            <person name="Brunel F."/>
            <person name="Bahn Y.-S."/>
            <person name="Chen W."/>
            <person name="Chen Y."/>
            <person name="Chow E.W.L."/>
            <person name="Coppee J.-Y."/>
            <person name="Floyd-Averette A."/>
            <person name="Gaillardin C."/>
            <person name="Gerik K.J."/>
            <person name="Goldberg J."/>
            <person name="Gonzalez-Hilarion S."/>
            <person name="Gujja S."/>
            <person name="Hamlin J.L."/>
            <person name="Hsueh Y.-P."/>
            <person name="Ianiri G."/>
            <person name="Jones S."/>
            <person name="Kodira C.D."/>
            <person name="Kozubowski L."/>
            <person name="Lam W."/>
            <person name="Marra M."/>
            <person name="Mesner L.D."/>
            <person name="Mieczkowski P.A."/>
            <person name="Moyrand F."/>
            <person name="Nielsen K."/>
            <person name="Proux C."/>
            <person name="Rossignol T."/>
            <person name="Schein J.E."/>
            <person name="Sun S."/>
            <person name="Wollschlaeger C."/>
            <person name="Wood I.A."/>
            <person name="Zeng Q."/>
            <person name="Neuveglise C."/>
            <person name="Newlon C.S."/>
            <person name="Perfect J.R."/>
            <person name="Lodge J.K."/>
            <person name="Idnurm A."/>
            <person name="Stajich J.E."/>
            <person name="Kronstad J.W."/>
            <person name="Sanyal K."/>
            <person name="Heitman J."/>
            <person name="Fraser J.A."/>
            <person name="Cuomo C.A."/>
            <person name="Dietrich F.S."/>
        </authorList>
    </citation>
    <scope>NUCLEOTIDE SEQUENCE [LARGE SCALE GENOMIC DNA]</scope>
    <source>
        <strain>H99 / ATCC 208821 / CBS 10515 / FGSC 9487</strain>
    </source>
</reference>
<reference key="2">
    <citation type="journal article" date="2011" name="Mol. Microbiol.">
        <title>The copper regulon of the human fungal pathogen Cryptococcus neoformans H99.</title>
        <authorList>
            <person name="Ding C."/>
            <person name="Yin J."/>
            <person name="Tovar E.M."/>
            <person name="Fitzpatrick D.A."/>
            <person name="Higgins D.G."/>
            <person name="Thiele D.J."/>
        </authorList>
    </citation>
    <scope>INDUCTION</scope>
</reference>
<reference key="3">
    <citation type="journal article" date="2017" name="MBio">
        <title>Cryptococcus neoformans iron-sulfur protein biogenesis machinery is a novel layer of protection against Cu stress.</title>
        <authorList>
            <person name="Garcia-Santamarina S."/>
            <person name="Uzarska M.A."/>
            <person name="Festa R.A."/>
            <person name="Lill R."/>
            <person name="Thiele D.J."/>
        </authorList>
    </citation>
    <scope>FUNCTION</scope>
    <scope>INDUCTION</scope>
    <scope>DISRUPTION PHENOTYPE</scope>
</reference>
<reference key="4">
    <citation type="journal article" date="2018" name="Med. Mycol.">
        <title>The mitochondrial ABC transporter Atm1 plays a role in iron metabolism and virulence in the human fungal pathogen Cryptococcus neoformans.</title>
        <authorList>
            <person name="Do E."/>
            <person name="Park S."/>
            <person name="Li M.H."/>
            <person name="Wang J.M."/>
            <person name="Ding C."/>
            <person name="Kronstad J.W."/>
            <person name="Jung W.H."/>
        </authorList>
    </citation>
    <scope>FUNCTION</scope>
    <scope>SUBCELLULAR LOCATION</scope>
    <scope>DISRUPTION PHENOTYPE</scope>
</reference>
<feature type="transit peptide" description="Mitochondrion" evidence="4">
    <location>
        <begin position="1"/>
        <end position="55"/>
    </location>
</feature>
<feature type="chain" id="PRO_0000449515" description="Iron-sulfur clusters transporter ATM1, mitochondrial" evidence="4">
    <location>
        <begin position="56"/>
        <end position="732"/>
    </location>
</feature>
<feature type="topological domain" description="Mitochondrial matrix" evidence="1">
    <location>
        <begin position="56"/>
        <end position="143"/>
    </location>
</feature>
<feature type="transmembrane region" description="Helical" evidence="4 6">
    <location>
        <begin position="144"/>
        <end position="164"/>
    </location>
</feature>
<feature type="topological domain" description="Mitochondrial intermembrane" evidence="1">
    <location>
        <begin position="165"/>
        <end position="181"/>
    </location>
</feature>
<feature type="transmembrane region" description="Helical" evidence="4 6">
    <location>
        <begin position="182"/>
        <end position="202"/>
    </location>
</feature>
<feature type="topological domain" description="Mitochondrial matrix" evidence="1">
    <location>
        <begin position="203"/>
        <end position="262"/>
    </location>
</feature>
<feature type="transmembrane region" description="Helical" evidence="4 6">
    <location>
        <begin position="263"/>
        <end position="283"/>
    </location>
</feature>
<feature type="topological domain" description="Mitochondrial intermembrane" evidence="1">
    <location>
        <position position="284"/>
    </location>
</feature>
<feature type="transmembrane region" description="Helical" evidence="4 6">
    <location>
        <begin position="285"/>
        <end position="305"/>
    </location>
</feature>
<feature type="topological domain" description="Mitochondrial matrix" evidence="1">
    <location>
        <begin position="306"/>
        <end position="378"/>
    </location>
</feature>
<feature type="transmembrane region" description="Helical" evidence="4 6">
    <location>
        <begin position="379"/>
        <end position="399"/>
    </location>
</feature>
<feature type="topological domain" description="Mitochondrial intermembrane" evidence="1">
    <location>
        <begin position="400"/>
        <end position="405"/>
    </location>
</feature>
<feature type="transmembrane region" description="Helical" evidence="4 6">
    <location>
        <begin position="406"/>
        <end position="426"/>
    </location>
</feature>
<feature type="topological domain" description="Mitochondrial matrix" evidence="1">
    <location>
        <begin position="427"/>
        <end position="732"/>
    </location>
</feature>
<feature type="domain" description="ABC transmembrane type-1" evidence="6">
    <location>
        <begin position="144"/>
        <end position="432"/>
    </location>
</feature>
<feature type="domain" description="ABC transporter" evidence="5">
    <location>
        <begin position="466"/>
        <end position="702"/>
    </location>
</feature>
<feature type="region of interest" description="Disordered" evidence="7">
    <location>
        <begin position="71"/>
        <end position="114"/>
    </location>
</feature>
<feature type="region of interest" description="Disordered" evidence="7">
    <location>
        <begin position="708"/>
        <end position="732"/>
    </location>
</feature>
<feature type="compositionally biased region" description="Low complexity" evidence="7">
    <location>
        <begin position="85"/>
        <end position="95"/>
    </location>
</feature>
<feature type="compositionally biased region" description="Polar residues" evidence="7">
    <location>
        <begin position="96"/>
        <end position="114"/>
    </location>
</feature>
<feature type="compositionally biased region" description="Basic and acidic residues" evidence="7">
    <location>
        <begin position="717"/>
        <end position="732"/>
    </location>
</feature>
<feature type="binding site" evidence="1">
    <location>
        <begin position="311"/>
        <end position="315"/>
    </location>
    <ligand>
        <name>glutathione</name>
        <dbReference type="ChEBI" id="CHEBI:57925"/>
    </ligand>
</feature>
<feature type="binding site" evidence="1">
    <location>
        <begin position="374"/>
        <end position="377"/>
    </location>
    <ligand>
        <name>glutathione</name>
        <dbReference type="ChEBI" id="CHEBI:57925"/>
    </ligand>
</feature>
<feature type="binding site" evidence="2">
    <location>
        <position position="424"/>
    </location>
    <ligand>
        <name>glutathione</name>
        <dbReference type="ChEBI" id="CHEBI:57925"/>
    </ligand>
</feature>
<feature type="binding site" evidence="3">
    <location>
        <position position="475"/>
    </location>
    <ligand>
        <name>ATP</name>
        <dbReference type="ChEBI" id="CHEBI:30616"/>
    </ligand>
</feature>
<feature type="binding site" evidence="5">
    <location>
        <begin position="499"/>
        <end position="506"/>
    </location>
    <ligand>
        <name>ATP</name>
        <dbReference type="ChEBI" id="CHEBI:30616"/>
    </ligand>
</feature>
<accession>J9VWU3</accession>
<comment type="function">
    <text evidence="1 9 10">Performs an essential function in the generation of cytoplasmic iron-sulfur proteins by mediating the ATP-dependent export of mitochondrial Fe/S cluster precursors synthesized by NFS1 and other mitochondrial proteins (PubMed:29089435, PubMed:29420779). Hydrolyzes ATP (By similarity). Binds glutathione and may function by transporting a glutathione-conjugated iron-sulfur compound (By similarity). Plays a role during copper stress, in a manner dependent on the copper metalloregulatory transcription factor CUF1 (PubMed:29089435).</text>
</comment>
<comment type="subunit">
    <text evidence="1">Homodimer.</text>
</comment>
<comment type="subcellular location">
    <subcellularLocation>
        <location evidence="13 14">Mitochondrion inner membrane</location>
        <topology evidence="4">Multi-pass membrane protein</topology>
    </subcellularLocation>
</comment>
<comment type="induction">
    <text evidence="8 9">Expression is positively regulated by CUF1 during copper stress.</text>
</comment>
<comment type="disruption phenotype">
    <text evidence="9 10">Increases susceptibility to copper toxicity and decreases fitness upon co-incubation with macrophage like cell lines (PubMed:29089435). Increases RNA level of genes involved in iron uptake (PubMed:29420779). Increases mitochondrial iron levels (PubMed:29420779). Increases mitochondrial reactive oxygen species (ROS) levels (PubMed:29420779). Increases mitochondrial complex I activity (PubMed:29420779). Decreases cellular heme levels (PubMed:29420779). Sensitive to hydrogen peroxide (PubMed:29420779). Abolishes cell population growth on the non-fermentable carbon source ethanol and acetate (PubMed:29420779). Decreases cell population growth rate; growth rate improves in a low oxygen environment (PubMed:29420779). Decreases virulence in a mouse intranasal infection model (PubMed:29420779).</text>
</comment>
<comment type="similarity">
    <text evidence="12">Belongs to the ABC transporter superfamily. ABCB family. Heavy Metal importer (TC 3.A.1.210) subfamily.</text>
</comment>
<name>ATM1_CRYNH</name>
<evidence type="ECO:0000250" key="1">
    <source>
        <dbReference type="UniProtKB" id="P40416"/>
    </source>
</evidence>
<evidence type="ECO:0000250" key="2">
    <source>
        <dbReference type="UniProtKB" id="Q2G506"/>
    </source>
</evidence>
<evidence type="ECO:0000250" key="3">
    <source>
        <dbReference type="UniProtKB" id="Q9NP58"/>
    </source>
</evidence>
<evidence type="ECO:0000255" key="4"/>
<evidence type="ECO:0000255" key="5">
    <source>
        <dbReference type="PROSITE-ProRule" id="PRU00434"/>
    </source>
</evidence>
<evidence type="ECO:0000255" key="6">
    <source>
        <dbReference type="PROSITE-ProRule" id="PRU00441"/>
    </source>
</evidence>
<evidence type="ECO:0000256" key="7">
    <source>
        <dbReference type="SAM" id="MobiDB-lite"/>
    </source>
</evidence>
<evidence type="ECO:0000269" key="8">
    <source>
    </source>
</evidence>
<evidence type="ECO:0000269" key="9">
    <source>
    </source>
</evidence>
<evidence type="ECO:0000269" key="10">
    <source>
    </source>
</evidence>
<evidence type="ECO:0000303" key="11">
    <source>
    </source>
</evidence>
<evidence type="ECO:0000305" key="12"/>
<evidence type="ECO:0000305" key="13">
    <source>
    </source>
</evidence>
<evidence type="ECO:0000305" key="14">
    <source>
    </source>
</evidence>